<protein>
    <recommendedName>
        <fullName evidence="5">Large ribosomal subunit protein eL24B</fullName>
    </recommendedName>
    <alternativeName>
        <fullName evidence="6">60S ribosomal protein L24-B</fullName>
    </alternativeName>
    <alternativeName>
        <fullName>L30</fullName>
    </alternativeName>
    <alternativeName>
        <fullName>RP29</fullName>
    </alternativeName>
    <alternativeName>
        <fullName>YL21</fullName>
    </alternativeName>
</protein>
<feature type="chain" id="PRO_0000136895" description="Large ribosomal subunit protein eL24B">
    <location>
        <begin position="1"/>
        <end position="155"/>
    </location>
</feature>
<feature type="region of interest" description="Disordered" evidence="1">
    <location>
        <begin position="66"/>
        <end position="155"/>
    </location>
</feature>
<feature type="compositionally biased region" description="Basic and acidic residues" evidence="1">
    <location>
        <begin position="89"/>
        <end position="129"/>
    </location>
</feature>
<feature type="modified residue" description="Phosphoserine" evidence="10">
    <location>
        <position position="7"/>
    </location>
</feature>
<proteinExistence type="evidence at protein level"/>
<sequence length="155" mass="17548">MKVEVDSFSGAKIYPGRGTLFVRGDSKIFRFQNSKSASLFKQRKNPRRIAWTVLFRKHHKKGITEEVAKKRSRKTVKAQRPITGASLDLIKERRSLKPEVRKANREEKLKANKEKKRAEKAARKAEKAKSAGVQGSKVSKQQAKGAFQKVAATSR</sequence>
<gene>
    <name evidence="6" type="primary">RPL24B</name>
    <name type="synonym">RPL30B</name>
    <name type="ordered locus">YGR148C</name>
    <name type="ORF">G6635</name>
</gene>
<organism>
    <name type="scientific">Saccharomyces cerevisiae (strain ATCC 204508 / S288c)</name>
    <name type="common">Baker's yeast</name>
    <dbReference type="NCBI Taxonomy" id="559292"/>
    <lineage>
        <taxon>Eukaryota</taxon>
        <taxon>Fungi</taxon>
        <taxon>Dikarya</taxon>
        <taxon>Ascomycota</taxon>
        <taxon>Saccharomycotina</taxon>
        <taxon>Saccharomycetes</taxon>
        <taxon>Saccharomycetales</taxon>
        <taxon>Saccharomycetaceae</taxon>
        <taxon>Saccharomyces</taxon>
    </lineage>
</organism>
<evidence type="ECO:0000256" key="1">
    <source>
        <dbReference type="SAM" id="MobiDB-lite"/>
    </source>
</evidence>
<evidence type="ECO:0000269" key="2">
    <source>
    </source>
</evidence>
<evidence type="ECO:0000269" key="3">
    <source>
    </source>
</evidence>
<evidence type="ECO:0000269" key="4">
    <source>
    </source>
</evidence>
<evidence type="ECO:0000303" key="5">
    <source>
    </source>
</evidence>
<evidence type="ECO:0000303" key="6">
    <source>
    </source>
</evidence>
<evidence type="ECO:0000305" key="7"/>
<evidence type="ECO:0000305" key="8">
    <source>
    </source>
</evidence>
<evidence type="ECO:0000305" key="9">
    <source>
    </source>
</evidence>
<evidence type="ECO:0007744" key="10">
    <source>
    </source>
</evidence>
<comment type="function">
    <text evidence="8">Component of the ribosome, a large ribonucleoprotein complex responsible for the synthesis of proteins in the cell. The small ribosomal subunit (SSU) binds messenger RNAs (mRNAs) and translates the encoded message by selecting cognate aminoacyl-transfer RNA (tRNA) molecules. The large subunit (LSU) contains the ribosomal catalytic site termed the peptidyl transferase center (PTC), which catalyzes the formation of peptide bonds, thereby polymerizing the amino acids delivered by tRNAs into a polypeptide chain. The nascent polypeptides leave the ribosome through a tunnel in the LSU and interact with protein factors that function in enzymatic processing, targeting, and the membrane insertion of nascent chains at the exit of the ribosomal tunnel.</text>
</comment>
<comment type="subunit">
    <text evidence="4 9">Component of the large ribosomal subunit (LSU). Mature yeast ribosomes consist of a small (40S) and a large (60S) subunit. The 40S small subunit contains 1 molecule of ribosomal RNA (18S rRNA) and 33 different proteins (encoded by 57 genes). The large 60S subunit contains 3 rRNA molecules (25S, 5.8S and 5S rRNA) and 46 different proteins (encoded by 81 genes) (PubMed:22096102, PubMed:9559554).</text>
</comment>
<comment type="subcellular location">
    <subcellularLocation>
        <location evidence="2 4">Cytoplasm</location>
    </subcellularLocation>
</comment>
<comment type="miscellaneous">
    <text evidence="3">Present with 36900 molecules/cell in log phase SD medium.</text>
</comment>
<comment type="miscellaneous">
    <text evidence="7">There are 2 genes for eL24 in yeast.</text>
</comment>
<comment type="similarity">
    <text evidence="7">Belongs to the eukaryotic ribosomal protein eL24 family.</text>
</comment>
<keyword id="KW-0002">3D-structure</keyword>
<keyword id="KW-0963">Cytoplasm</keyword>
<keyword id="KW-0597">Phosphoprotein</keyword>
<keyword id="KW-1185">Reference proteome</keyword>
<keyword id="KW-0687">Ribonucleoprotein</keyword>
<keyword id="KW-0689">Ribosomal protein</keyword>
<dbReference type="EMBL" id="M34387">
    <property type="protein sequence ID" value="AAA34736.1"/>
    <property type="molecule type" value="Genomic_DNA"/>
</dbReference>
<dbReference type="EMBL" id="X85807">
    <property type="protein sequence ID" value="CAA59806.1"/>
    <property type="molecule type" value="Genomic_DNA"/>
</dbReference>
<dbReference type="EMBL" id="Z72933">
    <property type="protein sequence ID" value="CAA97162.1"/>
    <property type="molecule type" value="Genomic_DNA"/>
</dbReference>
<dbReference type="EMBL" id="AY557819">
    <property type="protein sequence ID" value="AAS56145.1"/>
    <property type="molecule type" value="Genomic_DNA"/>
</dbReference>
<dbReference type="EMBL" id="EF123136">
    <property type="protein sequence ID" value="ABM97480.1"/>
    <property type="molecule type" value="mRNA"/>
</dbReference>
<dbReference type="EMBL" id="BK006941">
    <property type="protein sequence ID" value="DAA08240.1"/>
    <property type="molecule type" value="Genomic_DNA"/>
</dbReference>
<dbReference type="PIR" id="A35925">
    <property type="entry name" value="R6BYY0"/>
</dbReference>
<dbReference type="RefSeq" id="NP_011664.3">
    <property type="nucleotide sequence ID" value="NM_001181277.3"/>
</dbReference>
<dbReference type="PDB" id="6T7I">
    <property type="method" value="EM"/>
    <property type="resolution" value="3.20 A"/>
    <property type="chains" value="LW=1-155"/>
</dbReference>
<dbReference type="PDBsum" id="6T7I"/>
<dbReference type="EMDB" id="EMD-10396"/>
<dbReference type="SMR" id="P24000"/>
<dbReference type="BioGRID" id="33396">
    <property type="interactions" value="229"/>
</dbReference>
<dbReference type="ComplexPortal" id="CPX-1601">
    <property type="entry name" value="60S cytosolic large ribosomal subunit"/>
</dbReference>
<dbReference type="DIP" id="DIP-4722N"/>
<dbReference type="FunCoup" id="P24000">
    <property type="interactions" value="945"/>
</dbReference>
<dbReference type="IntAct" id="P24000">
    <property type="interactions" value="88"/>
</dbReference>
<dbReference type="MINT" id="P24000"/>
<dbReference type="STRING" id="4932.YGR148C"/>
<dbReference type="iPTMnet" id="P24000"/>
<dbReference type="PaxDb" id="4932-YGR148C"/>
<dbReference type="PeptideAtlas" id="P24000"/>
<dbReference type="EnsemblFungi" id="YGR148C_mRNA">
    <property type="protein sequence ID" value="YGR148C"/>
    <property type="gene ID" value="YGR148C"/>
</dbReference>
<dbReference type="GeneID" id="853051"/>
<dbReference type="KEGG" id="sce:YGR148C"/>
<dbReference type="AGR" id="SGD:S000003380"/>
<dbReference type="SGD" id="S000003380">
    <property type="gene designation" value="RPL24B"/>
</dbReference>
<dbReference type="VEuPathDB" id="FungiDB:YGR148C"/>
<dbReference type="eggNOG" id="KOG1722">
    <property type="taxonomic scope" value="Eukaryota"/>
</dbReference>
<dbReference type="GeneTree" id="ENSGT00950000183105"/>
<dbReference type="HOGENOM" id="CLU_106411_0_0_1"/>
<dbReference type="InParanoid" id="P24000"/>
<dbReference type="OMA" id="PGHGKKM"/>
<dbReference type="OrthoDB" id="1727108at2759"/>
<dbReference type="BioCyc" id="YEAST:G3O-30851-MONOMER"/>
<dbReference type="BioGRID-ORCS" id="853051">
    <property type="hits" value="0 hits in 10 CRISPR screens"/>
</dbReference>
<dbReference type="PRO" id="PR:P24000"/>
<dbReference type="Proteomes" id="UP000002311">
    <property type="component" value="Chromosome VII"/>
</dbReference>
<dbReference type="RNAct" id="P24000">
    <property type="molecule type" value="protein"/>
</dbReference>
<dbReference type="GO" id="GO:0005829">
    <property type="term" value="C:cytosol"/>
    <property type="evidence" value="ECO:0000304"/>
    <property type="project" value="Reactome"/>
</dbReference>
<dbReference type="GO" id="GO:0022625">
    <property type="term" value="C:cytosolic large ribosomal subunit"/>
    <property type="evidence" value="ECO:0000314"/>
    <property type="project" value="SGD"/>
</dbReference>
<dbReference type="GO" id="GO:0003729">
    <property type="term" value="F:mRNA binding"/>
    <property type="evidence" value="ECO:0000318"/>
    <property type="project" value="GO_Central"/>
</dbReference>
<dbReference type="GO" id="GO:0003723">
    <property type="term" value="F:RNA binding"/>
    <property type="evidence" value="ECO:0000314"/>
    <property type="project" value="SGD"/>
</dbReference>
<dbReference type="GO" id="GO:0003735">
    <property type="term" value="F:structural constituent of ribosome"/>
    <property type="evidence" value="ECO:0000318"/>
    <property type="project" value="GO_Central"/>
</dbReference>
<dbReference type="GO" id="GO:0002181">
    <property type="term" value="P:cytoplasmic translation"/>
    <property type="evidence" value="ECO:0000318"/>
    <property type="project" value="GO_Central"/>
</dbReference>
<dbReference type="GO" id="GO:0006414">
    <property type="term" value="P:translational elongation"/>
    <property type="evidence" value="ECO:0000315"/>
    <property type="project" value="SGD"/>
</dbReference>
<dbReference type="GO" id="GO:0006413">
    <property type="term" value="P:translational initiation"/>
    <property type="evidence" value="ECO:0000315"/>
    <property type="project" value="SGD"/>
</dbReference>
<dbReference type="CDD" id="cd00472">
    <property type="entry name" value="Ribosomal_L24e_L24"/>
    <property type="match status" value="1"/>
</dbReference>
<dbReference type="FunFam" id="2.30.170.20:FF:000002">
    <property type="entry name" value="60S ribosomal protein L24"/>
    <property type="match status" value="1"/>
</dbReference>
<dbReference type="Gene3D" id="6.10.250.1270">
    <property type="match status" value="1"/>
</dbReference>
<dbReference type="Gene3D" id="2.30.170.20">
    <property type="entry name" value="Ribosomal protein L24e"/>
    <property type="match status" value="1"/>
</dbReference>
<dbReference type="InterPro" id="IPR038630">
    <property type="entry name" value="L24e/L24_sf"/>
</dbReference>
<dbReference type="InterPro" id="IPR056366">
    <property type="entry name" value="Ribosomal_eL24"/>
</dbReference>
<dbReference type="InterPro" id="IPR000988">
    <property type="entry name" value="Ribosomal_eL24-rel_N"/>
</dbReference>
<dbReference type="InterPro" id="IPR023442">
    <property type="entry name" value="Ribosomal_eL24_CS"/>
</dbReference>
<dbReference type="PANTHER" id="PTHR10792">
    <property type="entry name" value="60S RIBOSOMAL PROTEIN L24"/>
    <property type="match status" value="1"/>
</dbReference>
<dbReference type="PANTHER" id="PTHR10792:SF1">
    <property type="entry name" value="RIBOSOMAL PROTEIN L24"/>
    <property type="match status" value="1"/>
</dbReference>
<dbReference type="Pfam" id="PF01246">
    <property type="entry name" value="Ribosomal_L24e"/>
    <property type="match status" value="1"/>
</dbReference>
<dbReference type="SUPFAM" id="SSF57716">
    <property type="entry name" value="Glucocorticoid receptor-like (DNA-binding domain)"/>
    <property type="match status" value="1"/>
</dbReference>
<dbReference type="PROSITE" id="PS01073">
    <property type="entry name" value="RIBOSOMAL_L24E"/>
    <property type="match status" value="1"/>
</dbReference>
<accession>P24000</accession>
<accession>A2TBN3</accession>
<accession>D6VUS9</accession>
<name>RL24B_YEAST</name>
<reference key="1">
    <citation type="journal article" date="1990" name="Mol. Cell. Biol.">
        <title>Ribosomal protein L30 is dispensable in the yeast Saccharomyces cerevisiae.</title>
        <authorList>
            <person name="Baronas-Lowell D.M."/>
            <person name="Warner J.R."/>
        </authorList>
    </citation>
    <scope>NUCLEOTIDE SEQUENCE [GENOMIC DNA]</scope>
</reference>
<reference key="2">
    <citation type="journal article" date="1995" name="Yeast">
        <title>The sequence of a 27 kb segment on the right arm of chromosome VII from Saccharomyces cerevisiae reveals MOL1, NAT2, RPL30B, RSR1, CYS4, PEM1/CHO2, NSR1 genes and ten new open reading frames.</title>
        <authorList>
            <person name="Skala J."/>
            <person name="Nawrocki A."/>
            <person name="Goffeau A."/>
        </authorList>
    </citation>
    <scope>NUCLEOTIDE SEQUENCE [GENOMIC DNA]</scope>
    <source>
        <strain>ATCC 204508 / S288c</strain>
    </source>
</reference>
<reference key="3">
    <citation type="journal article" date="1997" name="Nature">
        <title>The nucleotide sequence of Saccharomyces cerevisiae chromosome VII.</title>
        <authorList>
            <person name="Tettelin H."/>
            <person name="Agostoni-Carbone M.L."/>
            <person name="Albermann K."/>
            <person name="Albers M."/>
            <person name="Arroyo J."/>
            <person name="Backes U."/>
            <person name="Barreiros T."/>
            <person name="Bertani I."/>
            <person name="Bjourson A.J."/>
            <person name="Brueckner M."/>
            <person name="Bruschi C.V."/>
            <person name="Carignani G."/>
            <person name="Castagnoli L."/>
            <person name="Cerdan E."/>
            <person name="Clemente M.L."/>
            <person name="Coblenz A."/>
            <person name="Coglievina M."/>
            <person name="Coissac E."/>
            <person name="Defoor E."/>
            <person name="Del Bino S."/>
            <person name="Delius H."/>
            <person name="Delneri D."/>
            <person name="de Wergifosse P."/>
            <person name="Dujon B."/>
            <person name="Durand P."/>
            <person name="Entian K.-D."/>
            <person name="Eraso P."/>
            <person name="Escribano V."/>
            <person name="Fabiani L."/>
            <person name="Fartmann B."/>
            <person name="Feroli F."/>
            <person name="Feuermann M."/>
            <person name="Frontali L."/>
            <person name="Garcia-Gonzalez M."/>
            <person name="Garcia-Saez M.I."/>
            <person name="Goffeau A."/>
            <person name="Guerreiro P."/>
            <person name="Hani J."/>
            <person name="Hansen M."/>
            <person name="Hebling U."/>
            <person name="Hernandez K."/>
            <person name="Heumann K."/>
            <person name="Hilger F."/>
            <person name="Hofmann B."/>
            <person name="Indge K.J."/>
            <person name="James C.M."/>
            <person name="Klima R."/>
            <person name="Koetter P."/>
            <person name="Kramer B."/>
            <person name="Kramer W."/>
            <person name="Lauquin G."/>
            <person name="Leuther H."/>
            <person name="Louis E.J."/>
            <person name="Maillier E."/>
            <person name="Marconi A."/>
            <person name="Martegani E."/>
            <person name="Mazon M.J."/>
            <person name="Mazzoni C."/>
            <person name="McReynolds A.D.K."/>
            <person name="Melchioretto P."/>
            <person name="Mewes H.-W."/>
            <person name="Minenkova O."/>
            <person name="Mueller-Auer S."/>
            <person name="Nawrocki A."/>
            <person name="Netter P."/>
            <person name="Neu R."/>
            <person name="Nombela C."/>
            <person name="Oliver S.G."/>
            <person name="Panzeri L."/>
            <person name="Paoluzi S."/>
            <person name="Plevani P."/>
            <person name="Portetelle D."/>
            <person name="Portillo F."/>
            <person name="Potier S."/>
            <person name="Purnelle B."/>
            <person name="Rieger M."/>
            <person name="Riles L."/>
            <person name="Rinaldi T."/>
            <person name="Robben J."/>
            <person name="Rodrigues-Pousada C."/>
            <person name="Rodriguez-Belmonte E."/>
            <person name="Rodriguez-Torres A.M."/>
            <person name="Rose M."/>
            <person name="Ruzzi M."/>
            <person name="Saliola M."/>
            <person name="Sanchez-Perez M."/>
            <person name="Schaefer B."/>
            <person name="Schaefer M."/>
            <person name="Scharfe M."/>
            <person name="Schmidheini T."/>
            <person name="Schreer A."/>
            <person name="Skala J."/>
            <person name="Souciet J.-L."/>
            <person name="Steensma H.Y."/>
            <person name="Talla E."/>
            <person name="Thierry A."/>
            <person name="Vandenbol M."/>
            <person name="van der Aart Q.J.M."/>
            <person name="Van Dyck L."/>
            <person name="Vanoni M."/>
            <person name="Verhasselt P."/>
            <person name="Voet M."/>
            <person name="Volckaert G."/>
            <person name="Wambutt R."/>
            <person name="Watson M.D."/>
            <person name="Weber N."/>
            <person name="Wedler E."/>
            <person name="Wedler H."/>
            <person name="Wipfli P."/>
            <person name="Wolf K."/>
            <person name="Wright L.F."/>
            <person name="Zaccaria P."/>
            <person name="Zimmermann M."/>
            <person name="Zollner A."/>
            <person name="Kleine K."/>
        </authorList>
    </citation>
    <scope>NUCLEOTIDE SEQUENCE [LARGE SCALE GENOMIC DNA]</scope>
    <source>
        <strain>ATCC 204508 / S288c</strain>
    </source>
</reference>
<reference key="4">
    <citation type="journal article" date="2014" name="G3 (Bethesda)">
        <title>The reference genome sequence of Saccharomyces cerevisiae: Then and now.</title>
        <authorList>
            <person name="Engel S.R."/>
            <person name="Dietrich F.S."/>
            <person name="Fisk D.G."/>
            <person name="Binkley G."/>
            <person name="Balakrishnan R."/>
            <person name="Costanzo M.C."/>
            <person name="Dwight S.S."/>
            <person name="Hitz B.C."/>
            <person name="Karra K."/>
            <person name="Nash R.S."/>
            <person name="Weng S."/>
            <person name="Wong E.D."/>
            <person name="Lloyd P."/>
            <person name="Skrzypek M.S."/>
            <person name="Miyasato S.R."/>
            <person name="Simison M."/>
            <person name="Cherry J.M."/>
        </authorList>
    </citation>
    <scope>GENOME REANNOTATION</scope>
    <source>
        <strain>ATCC 204508 / S288c</strain>
    </source>
</reference>
<reference key="5">
    <citation type="journal article" date="2007" name="Genome Res.">
        <title>Approaching a complete repository of sequence-verified protein-encoding clones for Saccharomyces cerevisiae.</title>
        <authorList>
            <person name="Hu Y."/>
            <person name="Rolfs A."/>
            <person name="Bhullar B."/>
            <person name="Murthy T.V.S."/>
            <person name="Zhu C."/>
            <person name="Berger M.F."/>
            <person name="Camargo A.A."/>
            <person name="Kelley F."/>
            <person name="McCarron S."/>
            <person name="Jepson D."/>
            <person name="Richardson A."/>
            <person name="Raphael J."/>
            <person name="Moreira D."/>
            <person name="Taycher E."/>
            <person name="Zuo D."/>
            <person name="Mohr S."/>
            <person name="Kane M.F."/>
            <person name="Williamson J."/>
            <person name="Simpson A.J.G."/>
            <person name="Bulyk M.L."/>
            <person name="Harlow E."/>
            <person name="Marsischky G."/>
            <person name="Kolodner R.D."/>
            <person name="LaBaer J."/>
        </authorList>
    </citation>
    <scope>NUCLEOTIDE SEQUENCE [GENOMIC DNA]</scope>
    <source>
        <strain>ATCC 204508 / S288c</strain>
    </source>
</reference>
<reference key="6">
    <citation type="journal article" date="2007" name="Proc. Natl. Acad. Sci. U.S.A.">
        <title>High-density yeast-tiling array reveals previously undiscovered introns and extensive regulation of meiotic splicing.</title>
        <authorList>
            <person name="Juneau K."/>
            <person name="Palm C."/>
            <person name="Miranda M."/>
            <person name="Davis R.W."/>
        </authorList>
    </citation>
    <scope>NUCLEOTIDE SEQUENCE [MRNA] OF 1-86</scope>
    <source>
        <strain>ATCC 201390 / BY4743</strain>
    </source>
</reference>
<reference key="7">
    <citation type="journal article" date="1998" name="Yeast">
        <title>The list of cytoplasmic ribosomal proteins of Saccharomyces cerevisiae.</title>
        <authorList>
            <person name="Planta R.J."/>
            <person name="Mager W.H."/>
        </authorList>
    </citation>
    <scope>NOMENCLATURE</scope>
    <scope>SUBUNIT</scope>
</reference>
<reference key="8">
    <citation type="journal article" date="2003" name="Nature">
        <title>Global analysis of protein localization in budding yeast.</title>
        <authorList>
            <person name="Huh W.-K."/>
            <person name="Falvo J.V."/>
            <person name="Gerke L.C."/>
            <person name="Carroll A.S."/>
            <person name="Howson R.W."/>
            <person name="Weissman J.S."/>
            <person name="O'Shea E.K."/>
        </authorList>
    </citation>
    <scope>SUBCELLULAR LOCATION [LARGE SCALE ANALYSIS]</scope>
</reference>
<reference key="9">
    <citation type="journal article" date="2003" name="Nature">
        <title>Global analysis of protein expression in yeast.</title>
        <authorList>
            <person name="Ghaemmaghami S."/>
            <person name="Huh W.-K."/>
            <person name="Bower K."/>
            <person name="Howson R.W."/>
            <person name="Belle A."/>
            <person name="Dephoure N."/>
            <person name="O'Shea E.K."/>
            <person name="Weissman J.S."/>
        </authorList>
    </citation>
    <scope>LEVEL OF PROTEIN EXPRESSION [LARGE SCALE ANALYSIS]</scope>
</reference>
<reference key="10">
    <citation type="journal article" date="2007" name="J. Proteome Res.">
        <title>Large-scale phosphorylation analysis of alpha-factor-arrested Saccharomyces cerevisiae.</title>
        <authorList>
            <person name="Li X."/>
            <person name="Gerber S.A."/>
            <person name="Rudner A.D."/>
            <person name="Beausoleil S.A."/>
            <person name="Haas W."/>
            <person name="Villen J."/>
            <person name="Elias J.E."/>
            <person name="Gygi S.P."/>
        </authorList>
    </citation>
    <scope>IDENTIFICATION BY MASS SPECTROMETRY [LARGE SCALE ANALYSIS]</scope>
    <source>
        <strain>ADR376</strain>
    </source>
</reference>
<reference key="11">
    <citation type="journal article" date="2008" name="Mol. Cell. Proteomics">
        <title>A multidimensional chromatography technology for in-depth phosphoproteome analysis.</title>
        <authorList>
            <person name="Albuquerque C.P."/>
            <person name="Smolka M.B."/>
            <person name="Payne S.H."/>
            <person name="Bafna V."/>
            <person name="Eng J."/>
            <person name="Zhou H."/>
        </authorList>
    </citation>
    <scope>PHOSPHORYLATION [LARGE SCALE ANALYSIS] AT SER-7</scope>
    <scope>IDENTIFICATION BY MASS SPECTROMETRY [LARGE SCALE ANALYSIS]</scope>
</reference>
<reference key="12">
    <citation type="journal article" date="2011" name="Science">
        <title>The structure of the eukaryotic ribosome at 3.0 A resolution.</title>
        <authorList>
            <person name="Ben-Shem A."/>
            <person name="Garreau de Loubresse N."/>
            <person name="Melnikov S."/>
            <person name="Jenner L."/>
            <person name="Yusupova G."/>
            <person name="Yusupov M."/>
        </authorList>
    </citation>
    <scope>SUBUNIT</scope>
    <scope>SUBCELLULAR LOCATION</scope>
</reference>
<reference key="13">
    <citation type="journal article" date="2012" name="Proc. Natl. Acad. Sci. U.S.A.">
        <title>N-terminal acetylome analyses and functional insights of the N-terminal acetyltransferase NatB.</title>
        <authorList>
            <person name="Van Damme P."/>
            <person name="Lasa M."/>
            <person name="Polevoda B."/>
            <person name="Gazquez C."/>
            <person name="Elosegui-Artola A."/>
            <person name="Kim D.S."/>
            <person name="De Juan-Pardo E."/>
            <person name="Demeyer K."/>
            <person name="Hole K."/>
            <person name="Larrea E."/>
            <person name="Timmerman E."/>
            <person name="Prieto J."/>
            <person name="Arnesen T."/>
            <person name="Sherman F."/>
            <person name="Gevaert K."/>
            <person name="Aldabe R."/>
        </authorList>
    </citation>
    <scope>IDENTIFICATION BY MASS SPECTROMETRY [LARGE SCALE ANALYSIS]</scope>
</reference>
<reference key="14">
    <citation type="journal article" date="2014" name="Curr. Opin. Struct. Biol.">
        <title>A new system for naming ribosomal proteins.</title>
        <authorList>
            <person name="Ban N."/>
            <person name="Beckmann R."/>
            <person name="Cate J.H.D."/>
            <person name="Dinman J.D."/>
            <person name="Dragon F."/>
            <person name="Ellis S.R."/>
            <person name="Lafontaine D.L.J."/>
            <person name="Lindahl L."/>
            <person name="Liljas A."/>
            <person name="Lipton J.M."/>
            <person name="McAlear M.A."/>
            <person name="Moore P.B."/>
            <person name="Noller H.F."/>
            <person name="Ortega J."/>
            <person name="Panse V.G."/>
            <person name="Ramakrishnan V."/>
            <person name="Spahn C.M.T."/>
            <person name="Steitz T.A."/>
            <person name="Tchorzewski M."/>
            <person name="Tollervey D."/>
            <person name="Warren A.J."/>
            <person name="Williamson J.R."/>
            <person name="Wilson D."/>
            <person name="Yonath A."/>
            <person name="Yusupov M."/>
        </authorList>
    </citation>
    <scope>NOMENCLATURE</scope>
</reference>